<keyword id="KW-0963">Cytoplasm</keyword>
<keyword id="KW-0275">Fatty acid biosynthesis</keyword>
<keyword id="KW-0276">Fatty acid metabolism</keyword>
<keyword id="KW-0444">Lipid biosynthesis</keyword>
<keyword id="KW-0443">Lipid metabolism</keyword>
<keyword id="KW-0596">Phosphopantetheine</keyword>
<keyword id="KW-0597">Phosphoprotein</keyword>
<keyword id="KW-1185">Reference proteome</keyword>
<accession>A7NP13</accession>
<comment type="function">
    <text evidence="1">Carrier of the growing fatty acid chain in fatty acid biosynthesis.</text>
</comment>
<comment type="pathway">
    <text evidence="1">Lipid metabolism; fatty acid biosynthesis.</text>
</comment>
<comment type="subcellular location">
    <subcellularLocation>
        <location evidence="1">Cytoplasm</location>
    </subcellularLocation>
</comment>
<comment type="PTM">
    <text evidence="1">4'-phosphopantetheine is transferred from CoA to a specific serine of apo-ACP by AcpS. This modification is essential for activity because fatty acids are bound in thioester linkage to the sulfhydryl of the prosthetic group.</text>
</comment>
<comment type="similarity">
    <text evidence="1">Belongs to the acyl carrier protein (ACP) family.</text>
</comment>
<sequence length="82" mass="9177">MPSPEMEARLKQIVAEQLGVDESKIVPTARFTEDLNADSLDLVEMIMELEEAFGVEIPDEDAEKIITVQDALNYIEQKLQAA</sequence>
<name>ACP_ROSCS</name>
<organism>
    <name type="scientific">Roseiflexus castenholzii (strain DSM 13941 / HLO8)</name>
    <dbReference type="NCBI Taxonomy" id="383372"/>
    <lineage>
        <taxon>Bacteria</taxon>
        <taxon>Bacillati</taxon>
        <taxon>Chloroflexota</taxon>
        <taxon>Chloroflexia</taxon>
        <taxon>Chloroflexales</taxon>
        <taxon>Roseiflexineae</taxon>
        <taxon>Roseiflexaceae</taxon>
        <taxon>Roseiflexus</taxon>
    </lineage>
</organism>
<proteinExistence type="inferred from homology"/>
<reference key="1">
    <citation type="submission" date="2007-08" db="EMBL/GenBank/DDBJ databases">
        <title>Complete sequence of Roseiflexus castenholzii DSM 13941.</title>
        <authorList>
            <consortium name="US DOE Joint Genome Institute"/>
            <person name="Copeland A."/>
            <person name="Lucas S."/>
            <person name="Lapidus A."/>
            <person name="Barry K."/>
            <person name="Glavina del Rio T."/>
            <person name="Dalin E."/>
            <person name="Tice H."/>
            <person name="Pitluck S."/>
            <person name="Thompson L.S."/>
            <person name="Brettin T."/>
            <person name="Bruce D."/>
            <person name="Detter J.C."/>
            <person name="Han C."/>
            <person name="Tapia R."/>
            <person name="Schmutz J."/>
            <person name="Larimer F."/>
            <person name="Land M."/>
            <person name="Hauser L."/>
            <person name="Kyrpides N."/>
            <person name="Mikhailova N."/>
            <person name="Bryant D.A."/>
            <person name="Hanada S."/>
            <person name="Tsukatani Y."/>
            <person name="Richardson P."/>
        </authorList>
    </citation>
    <scope>NUCLEOTIDE SEQUENCE [LARGE SCALE GENOMIC DNA]</scope>
    <source>
        <strain>DSM 13941 / HLO8</strain>
    </source>
</reference>
<gene>
    <name evidence="1" type="primary">acpP</name>
    <name type="ordered locus">Rcas_3256</name>
</gene>
<dbReference type="EMBL" id="CP000804">
    <property type="protein sequence ID" value="ABU59308.1"/>
    <property type="molecule type" value="Genomic_DNA"/>
</dbReference>
<dbReference type="RefSeq" id="WP_012121732.1">
    <property type="nucleotide sequence ID" value="NC_009767.1"/>
</dbReference>
<dbReference type="SMR" id="A7NP13"/>
<dbReference type="STRING" id="383372.Rcas_3256"/>
<dbReference type="KEGG" id="rca:Rcas_3256"/>
<dbReference type="eggNOG" id="COG0236">
    <property type="taxonomic scope" value="Bacteria"/>
</dbReference>
<dbReference type="HOGENOM" id="CLU_108696_5_1_0"/>
<dbReference type="OrthoDB" id="9804551at2"/>
<dbReference type="UniPathway" id="UPA00094"/>
<dbReference type="Proteomes" id="UP000000263">
    <property type="component" value="Chromosome"/>
</dbReference>
<dbReference type="GO" id="GO:0005737">
    <property type="term" value="C:cytoplasm"/>
    <property type="evidence" value="ECO:0007669"/>
    <property type="project" value="UniProtKB-SubCell"/>
</dbReference>
<dbReference type="GO" id="GO:0000035">
    <property type="term" value="F:acyl binding"/>
    <property type="evidence" value="ECO:0007669"/>
    <property type="project" value="TreeGrafter"/>
</dbReference>
<dbReference type="GO" id="GO:0000036">
    <property type="term" value="F:acyl carrier activity"/>
    <property type="evidence" value="ECO:0007669"/>
    <property type="project" value="UniProtKB-UniRule"/>
</dbReference>
<dbReference type="FunFam" id="1.10.1200.10:FF:000003">
    <property type="entry name" value="Acyl carrier protein"/>
    <property type="match status" value="1"/>
</dbReference>
<dbReference type="Gene3D" id="1.10.1200.10">
    <property type="entry name" value="ACP-like"/>
    <property type="match status" value="1"/>
</dbReference>
<dbReference type="HAMAP" id="MF_01217">
    <property type="entry name" value="Acyl_carrier"/>
    <property type="match status" value="1"/>
</dbReference>
<dbReference type="InterPro" id="IPR003231">
    <property type="entry name" value="ACP"/>
</dbReference>
<dbReference type="InterPro" id="IPR036736">
    <property type="entry name" value="ACP-like_sf"/>
</dbReference>
<dbReference type="InterPro" id="IPR009081">
    <property type="entry name" value="PP-bd_ACP"/>
</dbReference>
<dbReference type="InterPro" id="IPR006162">
    <property type="entry name" value="Ppantetheine_attach_site"/>
</dbReference>
<dbReference type="NCBIfam" id="TIGR00517">
    <property type="entry name" value="acyl_carrier"/>
    <property type="match status" value="1"/>
</dbReference>
<dbReference type="NCBIfam" id="NF002148">
    <property type="entry name" value="PRK00982.1-2"/>
    <property type="match status" value="1"/>
</dbReference>
<dbReference type="NCBIfam" id="NF002150">
    <property type="entry name" value="PRK00982.1-4"/>
    <property type="match status" value="1"/>
</dbReference>
<dbReference type="NCBIfam" id="NF002151">
    <property type="entry name" value="PRK00982.1-5"/>
    <property type="match status" value="1"/>
</dbReference>
<dbReference type="PANTHER" id="PTHR20863">
    <property type="entry name" value="ACYL CARRIER PROTEIN"/>
    <property type="match status" value="1"/>
</dbReference>
<dbReference type="PANTHER" id="PTHR20863:SF76">
    <property type="entry name" value="CARRIER DOMAIN-CONTAINING PROTEIN"/>
    <property type="match status" value="1"/>
</dbReference>
<dbReference type="Pfam" id="PF00550">
    <property type="entry name" value="PP-binding"/>
    <property type="match status" value="1"/>
</dbReference>
<dbReference type="SUPFAM" id="SSF47336">
    <property type="entry name" value="ACP-like"/>
    <property type="match status" value="1"/>
</dbReference>
<dbReference type="PROSITE" id="PS50075">
    <property type="entry name" value="CARRIER"/>
    <property type="match status" value="1"/>
</dbReference>
<dbReference type="PROSITE" id="PS00012">
    <property type="entry name" value="PHOSPHOPANTETHEINE"/>
    <property type="match status" value="1"/>
</dbReference>
<feature type="chain" id="PRO_1000085611" description="Acyl carrier protein">
    <location>
        <begin position="1"/>
        <end position="82"/>
    </location>
</feature>
<feature type="domain" description="Carrier" evidence="2">
    <location>
        <begin position="4"/>
        <end position="79"/>
    </location>
</feature>
<feature type="modified residue" description="O-(pantetheine 4'-phosphoryl)serine" evidence="2">
    <location>
        <position position="39"/>
    </location>
</feature>
<protein>
    <recommendedName>
        <fullName evidence="1">Acyl carrier protein</fullName>
        <shortName evidence="1">ACP</shortName>
    </recommendedName>
</protein>
<evidence type="ECO:0000255" key="1">
    <source>
        <dbReference type="HAMAP-Rule" id="MF_01217"/>
    </source>
</evidence>
<evidence type="ECO:0000255" key="2">
    <source>
        <dbReference type="PROSITE-ProRule" id="PRU00258"/>
    </source>
</evidence>